<proteinExistence type="inferred from homology"/>
<protein>
    <recommendedName>
        <fullName evidence="1">Urease subunit beta</fullName>
        <ecNumber evidence="1">3.5.1.5</ecNumber>
    </recommendedName>
    <alternativeName>
        <fullName evidence="1">Urea amidohydrolase subunit beta</fullName>
    </alternativeName>
</protein>
<accession>A5GWV6</accession>
<gene>
    <name evidence="1" type="primary">ureB</name>
    <name type="ordered locus">SynRCC307_2462</name>
</gene>
<keyword id="KW-0963">Cytoplasm</keyword>
<keyword id="KW-0378">Hydrolase</keyword>
<keyword id="KW-1185">Reference proteome</keyword>
<reference key="1">
    <citation type="submission" date="2006-05" db="EMBL/GenBank/DDBJ databases">
        <authorList>
            <consortium name="Genoscope"/>
        </authorList>
    </citation>
    <scope>NUCLEOTIDE SEQUENCE [LARGE SCALE GENOMIC DNA]</scope>
    <source>
        <strain>RCC307</strain>
    </source>
</reference>
<name>URE2_SYNR3</name>
<comment type="catalytic activity">
    <reaction evidence="1">
        <text>urea + 2 H2O + H(+) = hydrogencarbonate + 2 NH4(+)</text>
        <dbReference type="Rhea" id="RHEA:20557"/>
        <dbReference type="ChEBI" id="CHEBI:15377"/>
        <dbReference type="ChEBI" id="CHEBI:15378"/>
        <dbReference type="ChEBI" id="CHEBI:16199"/>
        <dbReference type="ChEBI" id="CHEBI:17544"/>
        <dbReference type="ChEBI" id="CHEBI:28938"/>
        <dbReference type="EC" id="3.5.1.5"/>
    </reaction>
</comment>
<comment type="pathway">
    <text evidence="1">Nitrogen metabolism; urea degradation; CO(2) and NH(3) from urea (urease route): step 1/1.</text>
</comment>
<comment type="subunit">
    <text evidence="1">Heterotrimer of UreA (gamma), UreB (beta) and UreC (alpha) subunits. Three heterotrimers associate to form the active enzyme.</text>
</comment>
<comment type="subcellular location">
    <subcellularLocation>
        <location evidence="1">Cytoplasm</location>
    </subcellularLocation>
</comment>
<comment type="similarity">
    <text evidence="1">Belongs to the urease beta subunit family.</text>
</comment>
<organism>
    <name type="scientific">Synechococcus sp. (strain RCC307)</name>
    <dbReference type="NCBI Taxonomy" id="316278"/>
    <lineage>
        <taxon>Bacteria</taxon>
        <taxon>Bacillati</taxon>
        <taxon>Cyanobacteriota</taxon>
        <taxon>Cyanophyceae</taxon>
        <taxon>Synechococcales</taxon>
        <taxon>Synechococcaceae</taxon>
        <taxon>Synechococcus</taxon>
    </lineage>
</organism>
<dbReference type="EC" id="3.5.1.5" evidence="1"/>
<dbReference type="EMBL" id="CT978603">
    <property type="protein sequence ID" value="CAK29365.1"/>
    <property type="molecule type" value="Genomic_DNA"/>
</dbReference>
<dbReference type="SMR" id="A5GWV6"/>
<dbReference type="STRING" id="316278.SynRCC307_2462"/>
<dbReference type="KEGG" id="syr:SynRCC307_2462"/>
<dbReference type="eggNOG" id="COG0832">
    <property type="taxonomic scope" value="Bacteria"/>
</dbReference>
<dbReference type="HOGENOM" id="CLU_129707_1_1_3"/>
<dbReference type="OrthoDB" id="9797217at2"/>
<dbReference type="UniPathway" id="UPA00258">
    <property type="reaction ID" value="UER00370"/>
</dbReference>
<dbReference type="Proteomes" id="UP000001115">
    <property type="component" value="Chromosome"/>
</dbReference>
<dbReference type="GO" id="GO:0035550">
    <property type="term" value="C:urease complex"/>
    <property type="evidence" value="ECO:0007669"/>
    <property type="project" value="InterPro"/>
</dbReference>
<dbReference type="GO" id="GO:0009039">
    <property type="term" value="F:urease activity"/>
    <property type="evidence" value="ECO:0007669"/>
    <property type="project" value="UniProtKB-UniRule"/>
</dbReference>
<dbReference type="GO" id="GO:0043419">
    <property type="term" value="P:urea catabolic process"/>
    <property type="evidence" value="ECO:0007669"/>
    <property type="project" value="UniProtKB-UniRule"/>
</dbReference>
<dbReference type="CDD" id="cd00407">
    <property type="entry name" value="Urease_beta"/>
    <property type="match status" value="1"/>
</dbReference>
<dbReference type="FunFam" id="2.10.150.10:FF:000001">
    <property type="entry name" value="Urease subunit beta"/>
    <property type="match status" value="1"/>
</dbReference>
<dbReference type="Gene3D" id="2.10.150.10">
    <property type="entry name" value="Urease, beta subunit"/>
    <property type="match status" value="1"/>
</dbReference>
<dbReference type="HAMAP" id="MF_01954">
    <property type="entry name" value="Urease_beta"/>
    <property type="match status" value="1"/>
</dbReference>
<dbReference type="InterPro" id="IPR002019">
    <property type="entry name" value="Urease_beta-like"/>
</dbReference>
<dbReference type="InterPro" id="IPR036461">
    <property type="entry name" value="Urease_betasu_sf"/>
</dbReference>
<dbReference type="InterPro" id="IPR050069">
    <property type="entry name" value="Urease_subunit"/>
</dbReference>
<dbReference type="NCBIfam" id="NF009682">
    <property type="entry name" value="PRK13203.1"/>
    <property type="match status" value="1"/>
</dbReference>
<dbReference type="NCBIfam" id="TIGR00192">
    <property type="entry name" value="urease_beta"/>
    <property type="match status" value="1"/>
</dbReference>
<dbReference type="PANTHER" id="PTHR33569">
    <property type="entry name" value="UREASE"/>
    <property type="match status" value="1"/>
</dbReference>
<dbReference type="PANTHER" id="PTHR33569:SF1">
    <property type="entry name" value="UREASE"/>
    <property type="match status" value="1"/>
</dbReference>
<dbReference type="Pfam" id="PF00699">
    <property type="entry name" value="Urease_beta"/>
    <property type="match status" value="1"/>
</dbReference>
<dbReference type="SUPFAM" id="SSF51278">
    <property type="entry name" value="Urease, beta-subunit"/>
    <property type="match status" value="1"/>
</dbReference>
<evidence type="ECO:0000255" key="1">
    <source>
        <dbReference type="HAMAP-Rule" id="MF_01954"/>
    </source>
</evidence>
<feature type="chain" id="PRO_1000070779" description="Urease subunit beta">
    <location>
        <begin position="1"/>
        <end position="104"/>
    </location>
</feature>
<sequence>MAAMIPGELLPEPGELELNAGRPVTTVLVANTGDRPVQVGSHFHFAEANAALRFDREAARGQRLDIAAGTAIRFEPGDERQVQLVPFSGARRVVGFNAQINGDL</sequence>